<gene>
    <name evidence="15 19" type="primary">WDR24</name>
    <name evidence="19" type="synonym">C16orf21</name>
    <name evidence="18" type="ORF">JFP7</name>
</gene>
<protein>
    <recommendedName>
        <fullName evidence="16">GATOR2 complex protein WDR24</fullName>
        <ecNumber evidence="13 14">2.3.2.27</ecNumber>
    </recommendedName>
    <alternativeName>
        <fullName evidence="16">WD repeat-containing protein 24</fullName>
    </alternativeName>
</protein>
<keyword id="KW-0002">3D-structure</keyword>
<keyword id="KW-0072">Autophagy</keyword>
<keyword id="KW-0458">Lysosome</keyword>
<keyword id="KW-0472">Membrane</keyword>
<keyword id="KW-0479">Metal-binding</keyword>
<keyword id="KW-0597">Phosphoprotein</keyword>
<keyword id="KW-1267">Proteomics identification</keyword>
<keyword id="KW-1185">Reference proteome</keyword>
<keyword id="KW-0677">Repeat</keyword>
<keyword id="KW-0808">Transferase</keyword>
<keyword id="KW-0832">Ubl conjugation</keyword>
<keyword id="KW-0833">Ubl conjugation pathway</keyword>
<keyword id="KW-0853">WD repeat</keyword>
<keyword id="KW-0862">Zinc</keyword>
<keyword id="KW-0863">Zinc-finger</keyword>
<dbReference type="EC" id="2.3.2.27" evidence="13 14"/>
<dbReference type="EMBL" id="AE006464">
    <property type="protein sequence ID" value="AAK61244.1"/>
    <property type="status" value="ALT_SEQ"/>
    <property type="molecule type" value="Genomic_DNA"/>
</dbReference>
<dbReference type="EMBL" id="AL136863">
    <property type="protein sequence ID" value="CAB66797.1"/>
    <property type="molecule type" value="mRNA"/>
</dbReference>
<dbReference type="EMBL" id="Z92544">
    <property type="status" value="NOT_ANNOTATED_CDS"/>
    <property type="molecule type" value="Genomic_DNA"/>
</dbReference>
<dbReference type="EMBL" id="CH471112">
    <property type="protein sequence ID" value="EAW85752.1"/>
    <property type="molecule type" value="Genomic_DNA"/>
</dbReference>
<dbReference type="EMBL" id="CH471112">
    <property type="protein sequence ID" value="EAW85753.1"/>
    <property type="molecule type" value="Genomic_DNA"/>
</dbReference>
<dbReference type="EMBL" id="BC008025">
    <property type="protein sequence ID" value="AAH08025.1"/>
    <property type="molecule type" value="mRNA"/>
</dbReference>
<dbReference type="EMBL" id="BC009761">
    <property type="protein sequence ID" value="AAH09761.2"/>
    <property type="molecule type" value="mRNA"/>
</dbReference>
<dbReference type="CCDS" id="CCDS10420.1"/>
<dbReference type="RefSeq" id="NP_115635.1">
    <property type="nucleotide sequence ID" value="NM_032259.4"/>
</dbReference>
<dbReference type="PDB" id="7UHY">
    <property type="method" value="EM"/>
    <property type="resolution" value="3.66 A"/>
    <property type="chains" value="C=1-790"/>
</dbReference>
<dbReference type="PDBsum" id="7UHY"/>
<dbReference type="EMDB" id="EMD-26519"/>
<dbReference type="SMR" id="Q96S15"/>
<dbReference type="BioGRID" id="123953">
    <property type="interactions" value="42"/>
</dbReference>
<dbReference type="ComplexPortal" id="CPX-6227">
    <property type="entry name" value="GATOR2 complex"/>
</dbReference>
<dbReference type="CORUM" id="Q96S15"/>
<dbReference type="DIP" id="DIP-53812N"/>
<dbReference type="FunCoup" id="Q96S15">
    <property type="interactions" value="3131"/>
</dbReference>
<dbReference type="IntAct" id="Q96S15">
    <property type="interactions" value="29"/>
</dbReference>
<dbReference type="MINT" id="Q96S15"/>
<dbReference type="STRING" id="9606.ENSP00000293883"/>
<dbReference type="GlyGen" id="Q96S15">
    <property type="glycosylation" value="1 site, 1 O-linked glycan (1 site)"/>
</dbReference>
<dbReference type="iPTMnet" id="Q96S15"/>
<dbReference type="PhosphoSitePlus" id="Q96S15"/>
<dbReference type="SwissPalm" id="Q96S15"/>
<dbReference type="BioMuta" id="WDR24"/>
<dbReference type="DMDM" id="74762692"/>
<dbReference type="jPOST" id="Q96S15"/>
<dbReference type="MassIVE" id="Q96S15"/>
<dbReference type="PaxDb" id="9606-ENSP00000293883"/>
<dbReference type="PeptideAtlas" id="Q96S15"/>
<dbReference type="Pumba" id="Q96S15"/>
<dbReference type="Antibodypedia" id="42379">
    <property type="antibodies" value="45 antibodies from 17 providers"/>
</dbReference>
<dbReference type="DNASU" id="84219"/>
<dbReference type="Ensembl" id="ENST00000293883.9">
    <property type="protein sequence ID" value="ENSP00000293883.4"/>
    <property type="gene ID" value="ENSG00000127580.17"/>
</dbReference>
<dbReference type="GeneID" id="84219"/>
<dbReference type="KEGG" id="hsa:84219"/>
<dbReference type="MANE-Select" id="ENST00000293883.9">
    <property type="protein sequence ID" value="ENSP00000293883.4"/>
    <property type="RefSeq nucleotide sequence ID" value="NM_032259.4"/>
    <property type="RefSeq protein sequence ID" value="NP_115635.1"/>
</dbReference>
<dbReference type="UCSC" id="uc002ciz.2">
    <property type="organism name" value="human"/>
</dbReference>
<dbReference type="AGR" id="HGNC:20852"/>
<dbReference type="CTD" id="84219"/>
<dbReference type="DisGeNET" id="84219"/>
<dbReference type="GeneCards" id="WDR24"/>
<dbReference type="HGNC" id="HGNC:20852">
    <property type="gene designation" value="WDR24"/>
</dbReference>
<dbReference type="HPA" id="ENSG00000127580">
    <property type="expression patterns" value="Low tissue specificity"/>
</dbReference>
<dbReference type="MIM" id="620307">
    <property type="type" value="gene"/>
</dbReference>
<dbReference type="neXtProt" id="NX_Q96S15"/>
<dbReference type="OpenTargets" id="ENSG00000127580"/>
<dbReference type="PharmGKB" id="PA134918496"/>
<dbReference type="VEuPathDB" id="HostDB:ENSG00000127580"/>
<dbReference type="eggNOG" id="KOG0269">
    <property type="taxonomic scope" value="Eukaryota"/>
</dbReference>
<dbReference type="GeneTree" id="ENSGT00940000159396"/>
<dbReference type="HOGENOM" id="CLU_010233_0_0_1"/>
<dbReference type="InParanoid" id="Q96S15"/>
<dbReference type="OMA" id="EPMWLIS"/>
<dbReference type="OrthoDB" id="60955at2759"/>
<dbReference type="PAN-GO" id="Q96S15">
    <property type="GO annotations" value="6 GO annotations based on evolutionary models"/>
</dbReference>
<dbReference type="PhylomeDB" id="Q96S15"/>
<dbReference type="TreeFam" id="TF314190"/>
<dbReference type="PathwayCommons" id="Q96S15"/>
<dbReference type="Reactome" id="R-HSA-9639288">
    <property type="pathway name" value="Amino acids regulate mTORC1"/>
</dbReference>
<dbReference type="SignaLink" id="Q96S15"/>
<dbReference type="SIGNOR" id="Q96S15"/>
<dbReference type="UniPathway" id="UPA00143"/>
<dbReference type="BioGRID-ORCS" id="84219">
    <property type="hits" value="498 hits in 1170 CRISPR screens"/>
</dbReference>
<dbReference type="GeneWiki" id="WDR24"/>
<dbReference type="GenomeRNAi" id="84219"/>
<dbReference type="Pharos" id="Q96S15">
    <property type="development level" value="Tdark"/>
</dbReference>
<dbReference type="PRO" id="PR:Q96S15"/>
<dbReference type="Proteomes" id="UP000005640">
    <property type="component" value="Chromosome 16"/>
</dbReference>
<dbReference type="RNAct" id="Q96S15">
    <property type="molecule type" value="protein"/>
</dbReference>
<dbReference type="Bgee" id="ENSG00000127580">
    <property type="expression patterns" value="Expressed in right uterine tube and 101 other cell types or tissues"/>
</dbReference>
<dbReference type="ExpressionAtlas" id="Q96S15">
    <property type="expression patterns" value="baseline and differential"/>
</dbReference>
<dbReference type="GO" id="GO:0005829">
    <property type="term" value="C:cytosol"/>
    <property type="evidence" value="ECO:0000314"/>
    <property type="project" value="HPA"/>
</dbReference>
<dbReference type="GO" id="GO:0061700">
    <property type="term" value="C:GATOR2 complex"/>
    <property type="evidence" value="ECO:0000314"/>
    <property type="project" value="UniProtKB"/>
</dbReference>
<dbReference type="GO" id="GO:0043231">
    <property type="term" value="C:intracellular membrane-bounded organelle"/>
    <property type="evidence" value="ECO:0000314"/>
    <property type="project" value="HPA"/>
</dbReference>
<dbReference type="GO" id="GO:0005765">
    <property type="term" value="C:lysosomal membrane"/>
    <property type="evidence" value="ECO:0000314"/>
    <property type="project" value="UniProtKB"/>
</dbReference>
<dbReference type="GO" id="GO:0005774">
    <property type="term" value="C:vacuolar membrane"/>
    <property type="evidence" value="ECO:0000318"/>
    <property type="project" value="GO_Central"/>
</dbReference>
<dbReference type="GO" id="GO:0061630">
    <property type="term" value="F:ubiquitin protein ligase activity"/>
    <property type="evidence" value="ECO:0000314"/>
    <property type="project" value="UniProtKB"/>
</dbReference>
<dbReference type="GO" id="GO:0008270">
    <property type="term" value="F:zinc ion binding"/>
    <property type="evidence" value="ECO:0007669"/>
    <property type="project" value="UniProtKB-KW"/>
</dbReference>
<dbReference type="GO" id="GO:0006914">
    <property type="term" value="P:autophagy"/>
    <property type="evidence" value="ECO:0007669"/>
    <property type="project" value="UniProtKB-KW"/>
</dbReference>
<dbReference type="GO" id="GO:0034198">
    <property type="term" value="P:cellular response to amino acid starvation"/>
    <property type="evidence" value="ECO:0000315"/>
    <property type="project" value="UniProtKB"/>
</dbReference>
<dbReference type="GO" id="GO:0031669">
    <property type="term" value="P:cellular response to nutrient levels"/>
    <property type="evidence" value="ECO:0000314"/>
    <property type="project" value="UniProtKB"/>
</dbReference>
<dbReference type="GO" id="GO:1904262">
    <property type="term" value="P:negative regulation of TORC1 signaling"/>
    <property type="evidence" value="ECO:0000303"/>
    <property type="project" value="ComplexPortal"/>
</dbReference>
<dbReference type="GO" id="GO:0016239">
    <property type="term" value="P:positive regulation of macroautophagy"/>
    <property type="evidence" value="ECO:0000318"/>
    <property type="project" value="GO_Central"/>
</dbReference>
<dbReference type="GO" id="GO:0032008">
    <property type="term" value="P:positive regulation of TOR signaling"/>
    <property type="evidence" value="ECO:0000315"/>
    <property type="project" value="UniProtKB"/>
</dbReference>
<dbReference type="GO" id="GO:1904263">
    <property type="term" value="P:positive regulation of TORC1 signaling"/>
    <property type="evidence" value="ECO:0000314"/>
    <property type="project" value="UniProtKB"/>
</dbReference>
<dbReference type="GO" id="GO:0085020">
    <property type="term" value="P:protein K6-linked ubiquitination"/>
    <property type="evidence" value="ECO:0000314"/>
    <property type="project" value="UniProtKB"/>
</dbReference>
<dbReference type="GO" id="GO:0010506">
    <property type="term" value="P:regulation of autophagy"/>
    <property type="evidence" value="ECO:0000315"/>
    <property type="project" value="UniProtKB"/>
</dbReference>
<dbReference type="CDD" id="cd16693">
    <property type="entry name" value="mRING-H2-C3H3C2_WDR24"/>
    <property type="match status" value="1"/>
</dbReference>
<dbReference type="FunFam" id="2.130.10.10:FF:000106">
    <property type="entry name" value="WD repeat domain 24"/>
    <property type="match status" value="1"/>
</dbReference>
<dbReference type="Gene3D" id="2.130.10.10">
    <property type="entry name" value="YVTN repeat-like/Quinoprotein amine dehydrogenase"/>
    <property type="match status" value="1"/>
</dbReference>
<dbReference type="InterPro" id="IPR015943">
    <property type="entry name" value="WD40/YVTN_repeat-like_dom_sf"/>
</dbReference>
<dbReference type="InterPro" id="IPR019775">
    <property type="entry name" value="WD40_repeat_CS"/>
</dbReference>
<dbReference type="InterPro" id="IPR036322">
    <property type="entry name" value="WD40_repeat_dom_sf"/>
</dbReference>
<dbReference type="InterPro" id="IPR001680">
    <property type="entry name" value="WD40_rpt"/>
</dbReference>
<dbReference type="InterPro" id="IPR037590">
    <property type="entry name" value="WDR24"/>
</dbReference>
<dbReference type="PANTHER" id="PTHR46200">
    <property type="entry name" value="GATOR COMPLEX PROTEIN WDR24"/>
    <property type="match status" value="1"/>
</dbReference>
<dbReference type="PANTHER" id="PTHR46200:SF1">
    <property type="entry name" value="GATOR COMPLEX PROTEIN WDR24"/>
    <property type="match status" value="1"/>
</dbReference>
<dbReference type="Pfam" id="PF00400">
    <property type="entry name" value="WD40"/>
    <property type="match status" value="3"/>
</dbReference>
<dbReference type="SMART" id="SM00320">
    <property type="entry name" value="WD40"/>
    <property type="match status" value="6"/>
</dbReference>
<dbReference type="SUPFAM" id="SSF50978">
    <property type="entry name" value="WD40 repeat-like"/>
    <property type="match status" value="1"/>
</dbReference>
<dbReference type="PROSITE" id="PS00678">
    <property type="entry name" value="WD_REPEATS_1"/>
    <property type="match status" value="3"/>
</dbReference>
<dbReference type="PROSITE" id="PS50082">
    <property type="entry name" value="WD_REPEATS_2"/>
    <property type="match status" value="2"/>
</dbReference>
<dbReference type="PROSITE" id="PS50294">
    <property type="entry name" value="WD_REPEATS_REGION"/>
    <property type="match status" value="1"/>
</dbReference>
<sequence>MEKMSRVTTALGGSVLTGRTMHCHLDAPANAISVCRDAAQVVVAGRSIFKIYAIEEEQFVEKLNLRVGRKPSLNLSCADVVWHQMDENLLATAATNGVVVTWNLGRPSRNKQDQLFTEHKRTVNKVCFHPTEAHVLLSGSQDGFMKCFDLRRKDSVSTFSGQSESVRDVQFSIRDYFTFASTFENGNVQLWDIRRPDRCERMFTAHNGPVFCCDWHPEDRGWLATGGRDKMVKVWDMTTHRAKEMHCVQTIASVARVKWRPECRHHLATCSMMVDHNIYVWDVRRPFVPAAMFEEHRDVTTGIAWRHPHDPSFLLSGSKDSSLCQHLFRDASQPVERANPEGLCYGLFGDLAFAAKESLVAAESGRKPYTGDRRHPIFFKRKLDPAEPFAGLASSALSVFETEPGGGGMRWFVDTAERYALAGRPLAELCDHNAKVARELGRNQVAQTWTMLRIIYCSPGLVPTANLNHSVGKGGSCGLPLMNSFNLKDMAPGLGSETRLDRSKGDARSDTVLLDSSATLITNEDNEETEGSDVPADYLLGDVEGEEDELYLLDPEHAHPEDPECVLPQEAFPLRHEIVDTPPGPEHLQDKADSPHVSGSEADVASLAPVDSSFSLLSVSHALYDSRLPPDFFGVLVRDMLHFYAEQGDVQMAVSVLIVLGERVRKDIDEQTQEHWYTSYIDLLQRFRLWNVSNEVVKLSTSRAVSCLNQASTTLHVNCSHCKRPMSSRGWVCDRCHRCASMCAVCHHVVKGLFVWCQGCSHGGHLQHIMKWLEGSSHCPAGCGHLCEYS</sequence>
<feature type="chain" id="PRO_0000051375" description="GATOR2 complex protein WDR24">
    <location>
        <begin position="1"/>
        <end position="790"/>
    </location>
</feature>
<feature type="repeat" description="WD 1" evidence="2">
    <location>
        <begin position="72"/>
        <end position="112"/>
    </location>
</feature>
<feature type="repeat" description="WD 2" evidence="2">
    <location>
        <begin position="118"/>
        <end position="158"/>
    </location>
</feature>
<feature type="repeat" description="WD 3" evidence="2">
    <location>
        <begin position="161"/>
        <end position="201"/>
    </location>
</feature>
<feature type="repeat" description="WD 4" evidence="2">
    <location>
        <begin position="205"/>
        <end position="245"/>
    </location>
</feature>
<feature type="repeat" description="WD 5" evidence="2">
    <location>
        <begin position="249"/>
        <end position="291"/>
    </location>
</feature>
<feature type="repeat" description="WD 6" evidence="2">
    <location>
        <begin position="295"/>
        <end position="338"/>
    </location>
</feature>
<feature type="zinc finger region" description="C4-type" evidence="17">
    <location>
        <begin position="718"/>
        <end position="740"/>
    </location>
</feature>
<feature type="zinc finger region" description="RING-type; atypical" evidence="17">
    <location>
        <begin position="741"/>
        <end position="790"/>
    </location>
</feature>
<feature type="binding site" evidence="12 20">
    <location>
        <position position="719"/>
    </location>
    <ligand>
        <name>Zn(2+)</name>
        <dbReference type="ChEBI" id="CHEBI:29105"/>
        <label>1</label>
    </ligand>
</feature>
<feature type="binding site" evidence="12 20">
    <location>
        <position position="722"/>
    </location>
    <ligand>
        <name>Zn(2+)</name>
        <dbReference type="ChEBI" id="CHEBI:29105"/>
        <label>1</label>
    </ligand>
</feature>
<feature type="binding site" evidence="12 20">
    <location>
        <position position="733"/>
    </location>
    <ligand>
        <name>Zn(2+)</name>
        <dbReference type="ChEBI" id="CHEBI:29105"/>
        <label>1</label>
    </ligand>
</feature>
<feature type="binding site" evidence="12 20">
    <location>
        <position position="736"/>
    </location>
    <ligand>
        <name>Zn(2+)</name>
        <dbReference type="ChEBI" id="CHEBI:29105"/>
        <label>1</label>
    </ligand>
</feature>
<feature type="binding site" evidence="12 20">
    <location>
        <position position="743"/>
    </location>
    <ligand>
        <name>Zn(2+)</name>
        <dbReference type="ChEBI" id="CHEBI:29105"/>
        <label>2</label>
    </ligand>
</feature>
<feature type="binding site" evidence="12 20">
    <location>
        <position position="746"/>
    </location>
    <ligand>
        <name>Zn(2+)</name>
        <dbReference type="ChEBI" id="CHEBI:29105"/>
        <label>2</label>
    </ligand>
</feature>
<feature type="binding site" evidence="12 20">
    <location>
        <position position="757"/>
    </location>
    <ligand>
        <name>Zn(2+)</name>
        <dbReference type="ChEBI" id="CHEBI:29105"/>
        <label>3</label>
    </ligand>
</feature>
<feature type="binding site" evidence="12 20">
    <location>
        <position position="760"/>
    </location>
    <ligand>
        <name>Zn(2+)</name>
        <dbReference type="ChEBI" id="CHEBI:29105"/>
        <label>3</label>
    </ligand>
</feature>
<feature type="binding site" evidence="12 20">
    <location>
        <position position="762"/>
    </location>
    <ligand>
        <name>Zn(2+)</name>
        <dbReference type="ChEBI" id="CHEBI:29105"/>
        <label>4</label>
    </ligand>
</feature>
<feature type="binding site" evidence="12 20">
    <location>
        <position position="765"/>
    </location>
    <ligand>
        <name>Zn(2+)</name>
        <dbReference type="ChEBI" id="CHEBI:29105"/>
        <label>2</label>
    </ligand>
</feature>
<feature type="binding site" evidence="12 20">
    <location>
        <position position="768"/>
    </location>
    <ligand>
        <name>Zn(2+)</name>
        <dbReference type="ChEBI" id="CHEBI:29105"/>
        <label>2</label>
    </ligand>
</feature>
<feature type="binding site" evidence="12 20">
    <location>
        <position position="779"/>
    </location>
    <ligand>
        <name>Zn(2+)</name>
        <dbReference type="ChEBI" id="CHEBI:29105"/>
        <label>4</label>
    </ligand>
</feature>
<feature type="binding site" evidence="12 20">
    <location>
        <position position="783"/>
    </location>
    <ligand>
        <name>Zn(2+)</name>
        <dbReference type="ChEBI" id="CHEBI:29105"/>
        <label>4</label>
    </ligand>
</feature>
<feature type="binding site" evidence="12 20">
    <location>
        <position position="785"/>
    </location>
    <ligand>
        <name>Zn(2+)</name>
        <dbReference type="ChEBI" id="CHEBI:29105"/>
        <label>3</label>
    </ligand>
</feature>
<feature type="binding site" evidence="12 20">
    <location>
        <position position="787"/>
    </location>
    <ligand>
        <name>Zn(2+)</name>
        <dbReference type="ChEBI" id="CHEBI:29105"/>
        <label>3</label>
    </ligand>
</feature>
<feature type="modified residue" description="Phosphoserine; by AMPK" evidence="14">
    <location>
        <position position="155"/>
    </location>
</feature>
<feature type="modified residue" description="Phosphoserine" evidence="22 23">
    <location>
        <position position="470"/>
    </location>
</feature>
<feature type="modified residue" description="Phosphoserine" evidence="22 23">
    <location>
        <position position="496"/>
    </location>
</feature>
<feature type="modified residue" description="Phosphothreonine" evidence="22">
    <location>
        <position position="581"/>
    </location>
</feature>
<feature type="modified residue" description="Phosphoserine" evidence="21">
    <location>
        <position position="594"/>
    </location>
</feature>
<feature type="modified residue" description="Phosphoserine" evidence="1">
    <location>
        <position position="598"/>
    </location>
</feature>
<feature type="mutagenesis site" description="Abolished phosphorylation by AMPK." evidence="14">
    <original>S</original>
    <variation>A</variation>
    <location>
        <position position="155"/>
    </location>
</feature>
<feature type="mutagenesis site" description="Mimics phosphorylation, leading to inhibit mTORC1 activation." evidence="14">
    <original>S</original>
    <variation>D</variation>
    <location>
        <position position="155"/>
    </location>
</feature>
<feature type="mutagenesis site" description="Abolished interaction with WDR59 and assembly of the GATOR2 complex; when associated with E-632-633-E." evidence="12">
    <original>M</original>
    <variation>E</variation>
    <location>
        <position position="451"/>
    </location>
</feature>
<feature type="mutagenesis site" description="Abolished interaction with WDR59 and assembly of the GATOR2 complex; when associated with E-451." evidence="12">
    <original>FF</original>
    <variation>EE</variation>
    <location>
        <begin position="632"/>
        <end position="633"/>
    </location>
</feature>
<feature type="mutagenesis site" description="Impaired amino-acid-mediated mTORC1 activation." evidence="13">
    <original>CAVC</original>
    <variation>AAVA</variation>
    <location>
        <begin position="743"/>
        <end position="746"/>
    </location>
</feature>
<reference key="1">
    <citation type="journal article" date="2001" name="Hum. Mol. Genet.">
        <title>Sequence, structure and pathology of the fully annotated terminal 2 Mb of the short arm of human chromosome 16.</title>
        <authorList>
            <person name="Daniels R.J."/>
            <person name="Peden J.F."/>
            <person name="Lloyd C."/>
            <person name="Horsley S.W."/>
            <person name="Clark K."/>
            <person name="Tufarelli C."/>
            <person name="Kearney L."/>
            <person name="Buckle V.J."/>
            <person name="Doggett N.A."/>
            <person name="Flint J."/>
            <person name="Higgs D.R."/>
        </authorList>
    </citation>
    <scope>NUCLEOTIDE SEQUENCE [GENOMIC DNA]</scope>
</reference>
<reference key="2">
    <citation type="journal article" date="2001" name="Genome Res.">
        <title>Towards a catalog of human genes and proteins: sequencing and analysis of 500 novel complete protein coding human cDNAs.</title>
        <authorList>
            <person name="Wiemann S."/>
            <person name="Weil B."/>
            <person name="Wellenreuther R."/>
            <person name="Gassenhuber J."/>
            <person name="Glassl S."/>
            <person name="Ansorge W."/>
            <person name="Boecher M."/>
            <person name="Bloecker H."/>
            <person name="Bauersachs S."/>
            <person name="Blum H."/>
            <person name="Lauber J."/>
            <person name="Duesterhoeft A."/>
            <person name="Beyer A."/>
            <person name="Koehrer K."/>
            <person name="Strack N."/>
            <person name="Mewes H.-W."/>
            <person name="Ottenwaelder B."/>
            <person name="Obermaier B."/>
            <person name="Tampe J."/>
            <person name="Heubner D."/>
            <person name="Wambutt R."/>
            <person name="Korn B."/>
            <person name="Klein M."/>
            <person name="Poustka A."/>
        </authorList>
    </citation>
    <scope>NUCLEOTIDE SEQUENCE [LARGE SCALE MRNA]</scope>
    <source>
        <tissue>Testis</tissue>
    </source>
</reference>
<reference key="3">
    <citation type="journal article" date="2004" name="Nature">
        <title>The sequence and analysis of duplication-rich human chromosome 16.</title>
        <authorList>
            <person name="Martin J."/>
            <person name="Han C."/>
            <person name="Gordon L.A."/>
            <person name="Terry A."/>
            <person name="Prabhakar S."/>
            <person name="She X."/>
            <person name="Xie G."/>
            <person name="Hellsten U."/>
            <person name="Chan Y.M."/>
            <person name="Altherr M."/>
            <person name="Couronne O."/>
            <person name="Aerts A."/>
            <person name="Bajorek E."/>
            <person name="Black S."/>
            <person name="Blumer H."/>
            <person name="Branscomb E."/>
            <person name="Brown N.C."/>
            <person name="Bruno W.J."/>
            <person name="Buckingham J.M."/>
            <person name="Callen D.F."/>
            <person name="Campbell C.S."/>
            <person name="Campbell M.L."/>
            <person name="Campbell E.W."/>
            <person name="Caoile C."/>
            <person name="Challacombe J.F."/>
            <person name="Chasteen L.A."/>
            <person name="Chertkov O."/>
            <person name="Chi H.C."/>
            <person name="Christensen M."/>
            <person name="Clark L.M."/>
            <person name="Cohn J.D."/>
            <person name="Denys M."/>
            <person name="Detter J.C."/>
            <person name="Dickson M."/>
            <person name="Dimitrijevic-Bussod M."/>
            <person name="Escobar J."/>
            <person name="Fawcett J.J."/>
            <person name="Flowers D."/>
            <person name="Fotopulos D."/>
            <person name="Glavina T."/>
            <person name="Gomez M."/>
            <person name="Gonzales E."/>
            <person name="Goodstein D."/>
            <person name="Goodwin L.A."/>
            <person name="Grady D.L."/>
            <person name="Grigoriev I."/>
            <person name="Groza M."/>
            <person name="Hammon N."/>
            <person name="Hawkins T."/>
            <person name="Haydu L."/>
            <person name="Hildebrand C.E."/>
            <person name="Huang W."/>
            <person name="Israni S."/>
            <person name="Jett J."/>
            <person name="Jewett P.B."/>
            <person name="Kadner K."/>
            <person name="Kimball H."/>
            <person name="Kobayashi A."/>
            <person name="Krawczyk M.-C."/>
            <person name="Leyba T."/>
            <person name="Longmire J.L."/>
            <person name="Lopez F."/>
            <person name="Lou Y."/>
            <person name="Lowry S."/>
            <person name="Ludeman T."/>
            <person name="Manohar C.F."/>
            <person name="Mark G.A."/>
            <person name="McMurray K.L."/>
            <person name="Meincke L.J."/>
            <person name="Morgan J."/>
            <person name="Moyzis R.K."/>
            <person name="Mundt M.O."/>
            <person name="Munk A.C."/>
            <person name="Nandkeshwar R.D."/>
            <person name="Pitluck S."/>
            <person name="Pollard M."/>
            <person name="Predki P."/>
            <person name="Parson-Quintana B."/>
            <person name="Ramirez L."/>
            <person name="Rash S."/>
            <person name="Retterer J."/>
            <person name="Ricke D.O."/>
            <person name="Robinson D.L."/>
            <person name="Rodriguez A."/>
            <person name="Salamov A."/>
            <person name="Saunders E.H."/>
            <person name="Scott D."/>
            <person name="Shough T."/>
            <person name="Stallings R.L."/>
            <person name="Stalvey M."/>
            <person name="Sutherland R.D."/>
            <person name="Tapia R."/>
            <person name="Tesmer J.G."/>
            <person name="Thayer N."/>
            <person name="Thompson L.S."/>
            <person name="Tice H."/>
            <person name="Torney D.C."/>
            <person name="Tran-Gyamfi M."/>
            <person name="Tsai M."/>
            <person name="Ulanovsky L.E."/>
            <person name="Ustaszewska A."/>
            <person name="Vo N."/>
            <person name="White P.S."/>
            <person name="Williams A.L."/>
            <person name="Wills P.L."/>
            <person name="Wu J.-R."/>
            <person name="Wu K."/>
            <person name="Yang J."/>
            <person name="DeJong P."/>
            <person name="Bruce D."/>
            <person name="Doggett N.A."/>
            <person name="Deaven L."/>
            <person name="Schmutz J."/>
            <person name="Grimwood J."/>
            <person name="Richardson P."/>
            <person name="Rokhsar D.S."/>
            <person name="Eichler E.E."/>
            <person name="Gilna P."/>
            <person name="Lucas S.M."/>
            <person name="Myers R.M."/>
            <person name="Rubin E.M."/>
            <person name="Pennacchio L.A."/>
        </authorList>
    </citation>
    <scope>NUCLEOTIDE SEQUENCE [LARGE SCALE GENOMIC DNA]</scope>
</reference>
<reference key="4">
    <citation type="submission" date="2005-09" db="EMBL/GenBank/DDBJ databases">
        <authorList>
            <person name="Mural R.J."/>
            <person name="Istrail S."/>
            <person name="Sutton G.G."/>
            <person name="Florea L."/>
            <person name="Halpern A.L."/>
            <person name="Mobarry C.M."/>
            <person name="Lippert R."/>
            <person name="Walenz B."/>
            <person name="Shatkay H."/>
            <person name="Dew I."/>
            <person name="Miller J.R."/>
            <person name="Flanigan M.J."/>
            <person name="Edwards N.J."/>
            <person name="Bolanos R."/>
            <person name="Fasulo D."/>
            <person name="Halldorsson B.V."/>
            <person name="Hannenhalli S."/>
            <person name="Turner R."/>
            <person name="Yooseph S."/>
            <person name="Lu F."/>
            <person name="Nusskern D.R."/>
            <person name="Shue B.C."/>
            <person name="Zheng X.H."/>
            <person name="Zhong F."/>
            <person name="Delcher A.L."/>
            <person name="Huson D.H."/>
            <person name="Kravitz S.A."/>
            <person name="Mouchard L."/>
            <person name="Reinert K."/>
            <person name="Remington K.A."/>
            <person name="Clark A.G."/>
            <person name="Waterman M.S."/>
            <person name="Eichler E.E."/>
            <person name="Adams M.D."/>
            <person name="Hunkapiller M.W."/>
            <person name="Myers E.W."/>
            <person name="Venter J.C."/>
        </authorList>
    </citation>
    <scope>NUCLEOTIDE SEQUENCE [LARGE SCALE GENOMIC DNA]</scope>
</reference>
<reference key="5">
    <citation type="journal article" date="2004" name="Genome Res.">
        <title>The status, quality, and expansion of the NIH full-length cDNA project: the Mammalian Gene Collection (MGC).</title>
        <authorList>
            <consortium name="The MGC Project Team"/>
        </authorList>
    </citation>
    <scope>NUCLEOTIDE SEQUENCE [LARGE SCALE MRNA]</scope>
    <source>
        <tissue>Kidney</tissue>
        <tissue>Lung</tissue>
    </source>
</reference>
<reference key="6">
    <citation type="journal article" date="2009" name="Sci. Signal.">
        <title>Quantitative phosphoproteomic analysis of T cell receptor signaling reveals system-wide modulation of protein-protein interactions.</title>
        <authorList>
            <person name="Mayya V."/>
            <person name="Lundgren D.H."/>
            <person name="Hwang S.-I."/>
            <person name="Rezaul K."/>
            <person name="Wu L."/>
            <person name="Eng J.K."/>
            <person name="Rodionov V."/>
            <person name="Han D.K."/>
        </authorList>
    </citation>
    <scope>PHOSPHORYLATION [LARGE SCALE ANALYSIS] AT SER-594</scope>
    <scope>IDENTIFICATION BY MASS SPECTROMETRY [LARGE SCALE ANALYSIS]</scope>
    <source>
        <tissue>Leukemic T-cell</tissue>
    </source>
</reference>
<reference key="7">
    <citation type="journal article" date="2013" name="J. Proteome Res.">
        <title>Toward a comprehensive characterization of a human cancer cell phosphoproteome.</title>
        <authorList>
            <person name="Zhou H."/>
            <person name="Di Palma S."/>
            <person name="Preisinger C."/>
            <person name="Peng M."/>
            <person name="Polat A.N."/>
            <person name="Heck A.J."/>
            <person name="Mohammed S."/>
        </authorList>
    </citation>
    <scope>PHOSPHORYLATION [LARGE SCALE ANALYSIS] AT SER-470; SER-496 AND THR-581</scope>
    <scope>IDENTIFICATION BY MASS SPECTROMETRY [LARGE SCALE ANALYSIS]</scope>
    <source>
        <tissue>Cervix carcinoma</tissue>
        <tissue>Erythroleukemia</tissue>
    </source>
</reference>
<reference key="8">
    <citation type="journal article" date="2014" name="Cell Rep.">
        <title>The Sestrins interact with GATOR2 to negatively regulate the amino-acid-sensing pathway upstream of mTORC1.</title>
        <authorList>
            <person name="Chantranupong L."/>
            <person name="Wolfson R.L."/>
            <person name="Orozco J.M."/>
            <person name="Saxton R.A."/>
            <person name="Scaria S.M."/>
            <person name="Bar-Peled L."/>
            <person name="Spooner E."/>
            <person name="Isasa M."/>
            <person name="Gygi S.P."/>
            <person name="Sabatini D.M."/>
        </authorList>
    </citation>
    <scope>INTERACTION WITH SESN1; SESN2 AND SESN3</scope>
</reference>
<reference key="9">
    <citation type="journal article" date="2014" name="Cell Rep.">
        <title>Sestrins inhibit mTORC1 kinase activation through the GATOR complex.</title>
        <authorList>
            <person name="Parmigiani A."/>
            <person name="Nourbakhsh A."/>
            <person name="Ding B."/>
            <person name="Wang W."/>
            <person name="Kim Y.C."/>
            <person name="Akopiants K."/>
            <person name="Guan K.L."/>
            <person name="Karin M."/>
            <person name="Budanov A.V."/>
        </authorList>
    </citation>
    <scope>INTERACTION WITH SESN2</scope>
</reference>
<reference key="10">
    <citation type="journal article" date="2013" name="Science">
        <title>A Tumor suppressor complex with GAP activity for the Rag GTPases that signal amino acid sufficiency to mTORC1.</title>
        <authorList>
            <person name="Bar-Peled L."/>
            <person name="Chantranupong L."/>
            <person name="Cherniack A.D."/>
            <person name="Chen W.W."/>
            <person name="Ottina K.A."/>
            <person name="Grabiner B.C."/>
            <person name="Spear E.D."/>
            <person name="Carter S.L."/>
            <person name="Meyerson M."/>
            <person name="Sabatini D.M."/>
        </authorList>
    </citation>
    <scope>FUNCTION</scope>
    <scope>IDENTIFICATION IN GATOR COMPLEX</scope>
    <scope>SUBUNIT</scope>
</reference>
<reference key="11">
    <citation type="journal article" date="2014" name="J. Proteomics">
        <title>An enzyme assisted RP-RPLC approach for in-depth analysis of human liver phosphoproteome.</title>
        <authorList>
            <person name="Bian Y."/>
            <person name="Song C."/>
            <person name="Cheng K."/>
            <person name="Dong M."/>
            <person name="Wang F."/>
            <person name="Huang J."/>
            <person name="Sun D."/>
            <person name="Wang L."/>
            <person name="Ye M."/>
            <person name="Zou H."/>
        </authorList>
    </citation>
    <scope>PHOSPHORYLATION [LARGE SCALE ANALYSIS] AT SER-470 AND SER-496</scope>
    <scope>IDENTIFICATION BY MASS SPECTROMETRY [LARGE SCALE ANALYSIS]</scope>
    <source>
        <tissue>Liver</tissue>
    </source>
</reference>
<reference key="12">
    <citation type="journal article" date="2016" name="Cell">
        <title>The CASTOR proteins are arginine sensors for the mTORC1 pathway.</title>
        <authorList>
            <person name="Chantranupong L."/>
            <person name="Scaria S.M."/>
            <person name="Saxton R.A."/>
            <person name="Gygi M.P."/>
            <person name="Shen K."/>
            <person name="Wyant G.A."/>
            <person name="Wang T."/>
            <person name="Harper J.W."/>
            <person name="Gygi S.P."/>
            <person name="Sabatini D.M."/>
        </authorList>
    </citation>
    <scope>ACTIVITY REGULATION</scope>
    <scope>INTERACTION WITH CASTOR2 AND CASTOR1</scope>
</reference>
<reference key="13">
    <citation type="journal article" date="2016" name="Nature">
        <title>Mechanism of arginine sensing by CASTOR1 upstream of mTORC1.</title>
        <authorList>
            <person name="Saxton R.A."/>
            <person name="Chantranupong L."/>
            <person name="Knockenhauer K.E."/>
            <person name="Schwartz T.U."/>
            <person name="Sabatini D.M."/>
        </authorList>
    </citation>
    <scope>FUNCTION</scope>
    <scope>ACTIVITY REGULATION</scope>
</reference>
<reference key="14">
    <citation type="journal article" date="2016" name="Science">
        <title>Sestrin2 is a leucine sensor for the mTORC1 pathway.</title>
        <authorList>
            <person name="Wolfson R.L."/>
            <person name="Chantranupong L."/>
            <person name="Saxton R.A."/>
            <person name="Shen K."/>
            <person name="Scaria S.M."/>
            <person name="Cantor J.R."/>
            <person name="Sabatini D.M."/>
        </authorList>
    </citation>
    <scope>FUNCTION</scope>
    <scope>ACTIVITY REGULATION</scope>
    <scope>INTERACTION WITH SESN2</scope>
</reference>
<reference key="15">
    <citation type="journal article" date="2016" name="Science">
        <title>Structural basis for leucine sensing by the Sestrin2-mTORC1 pathway.</title>
        <authorList>
            <person name="Saxton R.A."/>
            <person name="Knockenhauer K.E."/>
            <person name="Wolfson R.L."/>
            <person name="Chantranupong L."/>
            <person name="Pacold M.E."/>
            <person name="Wang T."/>
            <person name="Schwartz T.U."/>
            <person name="Sabatini D.M."/>
        </authorList>
    </citation>
    <scope>FUNCTION</scope>
    <scope>ACTIVITY REGULATION</scope>
    <scope>INTERACTION WITH SESN2</scope>
</reference>
<reference key="16">
    <citation type="journal article" date="2016" name="PLoS Genet.">
        <title>The GATOR2 component Wdr24 regulates TORC1 activity and lysosome function.</title>
        <authorList>
            <person name="Cai W."/>
            <person name="Wei Y."/>
            <person name="Jarnik M."/>
            <person name="Reich J."/>
            <person name="Lilly M.A."/>
        </authorList>
    </citation>
    <scope>FUNCTION</scope>
</reference>
<reference key="17">
    <citation type="journal article" date="2017" name="Nature">
        <title>KICSTOR recruits GATOR1 to the lysosome and is necessary for nutrients to regulate mTORC1.</title>
        <authorList>
            <person name="Wolfson R.L."/>
            <person name="Chantranupong L."/>
            <person name="Wyant G.A."/>
            <person name="Gu X."/>
            <person name="Orozco J.M."/>
            <person name="Shen K."/>
            <person name="Condon K.J."/>
            <person name="Petri S."/>
            <person name="Kedir J."/>
            <person name="Scaria S.M."/>
            <person name="Abu-Remaileh M."/>
            <person name="Frankel W.N."/>
            <person name="Sabatini D.M."/>
        </authorList>
    </citation>
    <scope>SUBCELLULAR LOCATION</scope>
</reference>
<reference key="18">
    <citation type="journal article" date="2023" name="Mol. Cell">
        <title>Ring domains are essential for GATOR2-dependent mTORC1 activation.</title>
        <authorList>
            <person name="Jiang C."/>
            <person name="Dai X."/>
            <person name="He S."/>
            <person name="Zhou H."/>
            <person name="Fang L."/>
            <person name="Guo J."/>
            <person name="Liu S."/>
            <person name="Zhang T."/>
            <person name="Pan W."/>
            <person name="Yu H."/>
            <person name="Fu T."/>
            <person name="Li D."/>
            <person name="Inuzuka H."/>
            <person name="Wang P."/>
            <person name="Xiao J."/>
            <person name="Wei W."/>
        </authorList>
    </citation>
    <scope>FUNCTION</scope>
    <scope>CATALYTIC ACTIVITY</scope>
    <scope>PATHWAY</scope>
    <scope>ACTIVITY REGULATION</scope>
    <scope>IDENTIFICATION IN GATOR2 COMPLEX</scope>
    <scope>MUTAGENESIS OF 743-CYS--CYS-746</scope>
</reference>
<reference key="19">
    <citation type="journal article" date="2023" name="Nat. Metab.">
        <title>AMPK-dependent phosphorylation of the GATOR2 component WDR24 suppresses glucose-mediated mTORC1 activation.</title>
        <authorList>
            <person name="Dai X."/>
            <person name="Jiang C."/>
            <person name="Jiang Q."/>
            <person name="Fang L."/>
            <person name="Yu H."/>
            <person name="Guo J."/>
            <person name="Yan P."/>
            <person name="Chi F."/>
            <person name="Zhang T."/>
            <person name="Inuzuka H."/>
            <person name="Asara J.M."/>
            <person name="Wang P."/>
            <person name="Guo J."/>
            <person name="Wei W."/>
        </authorList>
    </citation>
    <scope>FUNCTION</scope>
    <scope>CATALYTIC ACTIVITY</scope>
    <scope>PHOSPHORYLATION AT SER-155</scope>
    <scope>MUTAGENESIS OF SER-155</scope>
</reference>
<reference evidence="20" key="20">
    <citation type="journal article" date="2022" name="Nature">
        <title>Structure of the nutrient-sensing hub GATOR2.</title>
        <authorList>
            <person name="Valenstein M.L."/>
            <person name="Rogala K.B."/>
            <person name="Lalgudi P.V."/>
            <person name="Brignole E.J."/>
            <person name="Gu X."/>
            <person name="Saxton R.A."/>
            <person name="Chantranupong L."/>
            <person name="Kolibius J."/>
            <person name="Quast J.P."/>
            <person name="Sabatini D.M."/>
        </authorList>
    </citation>
    <scope>STRUCTURE BY ELECTRON MICROSCOPY (3.66 ANGSTROMS) IN COMPLEX WITH ZINC; WDR59; SEC13; MIOS AND SEH1L</scope>
    <scope>ACTIVITY REGULATION</scope>
    <scope>IDENTIFICATION IN GATOR2 COMPLEX</scope>
    <scope>MUTAGENESIS OF MET-451 AND 632-PHE-PHE-633</scope>
</reference>
<proteinExistence type="evidence at protein level"/>
<organism>
    <name type="scientific">Homo sapiens</name>
    <name type="common">Human</name>
    <dbReference type="NCBI Taxonomy" id="9606"/>
    <lineage>
        <taxon>Eukaryota</taxon>
        <taxon>Metazoa</taxon>
        <taxon>Chordata</taxon>
        <taxon>Craniata</taxon>
        <taxon>Vertebrata</taxon>
        <taxon>Euteleostomi</taxon>
        <taxon>Mammalia</taxon>
        <taxon>Eutheria</taxon>
        <taxon>Euarchontoglires</taxon>
        <taxon>Primates</taxon>
        <taxon>Haplorrhini</taxon>
        <taxon>Catarrhini</taxon>
        <taxon>Hominidae</taxon>
        <taxon>Homo</taxon>
    </lineage>
</organism>
<comment type="function">
    <text evidence="3 6 7 9 10 12 13 14">Catalytic component of the GATOR2 complex, a multiprotein complex that acts as an activator of the amino acid-sensing branch of the mTORC1 signaling pathway (PubMed:23723238, PubMed:26449471, PubMed:26586190, PubMed:27487210, PubMed:35831510, PubMed:36528027, PubMed:36732624). The GATOR2 complex indirectly activates mTORC1 through the inhibition of the GATOR1 subcomplex (PubMed:23723238, PubMed:26449471, PubMed:26586190, PubMed:27487210, PubMed:35831510, PubMed:36528027, PubMed:36732624). GATOR2 probably acts as an E3 ubiquitin-protein ligase toward GATOR1 (PubMed:36528027, PubMed:36732624). In the presence of abundant amino acids, the GATOR2 complex mediates ubiquitination of the NPRL2 core component of the GATOR1 complex, leading to GATOR1 inactivation (PubMed:36528027, PubMed:36732624). In the absence of amino acids, GATOR2 is inhibited, activating the GATOR1 complex (PubMed:26449471, PubMed:26586190, PubMed:27487210). In addition to its role in regulation of the mTORC1 complex, promotes the acidification of lysosomes and facilitates autophagic flux (PubMed:27166823). Within the GATOR2 complex, WDR24 constitutes the catalytic subunit that mediates 'Lys-6'-linked ubiquitination of NPRL2 (PubMed:36528027, PubMed:36732624).</text>
</comment>
<comment type="catalytic activity">
    <reaction evidence="13 14">
        <text>S-ubiquitinyl-[E2 ubiquitin-conjugating enzyme]-L-cysteine + [acceptor protein]-L-lysine = [E2 ubiquitin-conjugating enzyme]-L-cysteine + N(6)-ubiquitinyl-[acceptor protein]-L-lysine.</text>
        <dbReference type="EC" id="2.3.2.27"/>
    </reaction>
</comment>
<comment type="activity regulation">
    <text evidence="6 7 8 10 12 13">The GATOR2 complex is negatively regulated by the upstream amino acid sensors CASTOR1 and SESN2, which sequester the GATOR2 complex in absence of amino acids (PubMed:26449471, PubMed:26586190, PubMed:26972053, PubMed:27487210, PubMed:35831510, PubMed:36528027). In the presence of abundant amino acids, GATOR2 is released from CASTOR1 and SESN2 and activated (PubMed:26449471, PubMed:26586190, PubMed:26972053, PubMed:27487210, PubMed:35831510, PubMed:36528027).</text>
</comment>
<comment type="pathway">
    <text evidence="13">Protein modification; protein ubiquitination.</text>
</comment>
<comment type="subunit">
    <text evidence="3 4 5 6 7 8 12 13">Component of the GATOR2 subcomplex, composed of MIOS, SEC13, SEH1L, WDR24 and WDR59 (PubMed:23723238, PubMed:35831510, PubMed:36528027). The GATOR2 complex interacts with CASTOR1 and CASTOR2; the interaction is negatively regulated by arginine (PubMed:26972053). The GATOR2 complex interacts with SESN1, SESN2 and SESN3; the interaction is negatively regulated by amino acids (PubMed:25263562, PubMed:25457612, PubMed:26449471, PubMed:26586190). SESN1, SESN2 and SESN3 convey leucine availability via direct interaction with SEH1L and WDR24 (PubMed:35831510).</text>
</comment>
<comment type="interaction">
    <interactant intactId="EBI-746424">
        <id>Q96S15</id>
    </interactant>
    <interactant intactId="EBI-743771">
        <id>Q92624</id>
        <label>APPBP2</label>
    </interactant>
    <organismsDiffer>false</organismsDiffer>
    <experiments>4</experiments>
</comment>
<comment type="interaction">
    <interactant intactId="EBI-746424">
        <id>Q96S15</id>
    </interactant>
    <interactant intactId="EBI-2515122">
        <id>Q9NXC5</id>
        <label>MIOS</label>
    </interactant>
    <organismsDiffer>false</organismsDiffer>
    <experiments>18</experiments>
</comment>
<comment type="interaction">
    <interactant intactId="EBI-746424">
        <id>Q96S15</id>
    </interactant>
    <interactant intactId="EBI-3939642">
        <id>P58004</id>
        <label>SESN2</label>
    </interactant>
    <organismsDiffer>false</organismsDiffer>
    <experiments>18</experiments>
</comment>
<comment type="interaction">
    <interactant intactId="EBI-746424">
        <id>Q96S15</id>
    </interactant>
    <interactant intactId="EBI-16179942">
        <id>P58005</id>
        <label>SESN3</label>
    </interactant>
    <organismsDiffer>false</organismsDiffer>
    <experiments>3</experiments>
</comment>
<comment type="interaction">
    <interactant intactId="EBI-746424">
        <id>Q96S15</id>
    </interactant>
    <interactant intactId="EBI-10749411">
        <id>Q5T011</id>
        <label>SZT2</label>
    </interactant>
    <organismsDiffer>false</organismsDiffer>
    <experiments>5</experiments>
</comment>
<comment type="interaction">
    <interactant intactId="EBI-746424">
        <id>Q96S15</id>
    </interactant>
    <interactant intactId="EBI-2515073">
        <id>Q6PJI9</id>
        <label>WDR59</label>
    </interactant>
    <organismsDiffer>false</organismsDiffer>
    <experiments>8</experiments>
</comment>
<comment type="subcellular location">
    <subcellularLocation>
        <location evidence="11">Lysosome membrane</location>
    </subcellularLocation>
</comment>
<comment type="PTM">
    <text evidence="14">Phosphorylation at Ser-155 by AMPK in response to glucose deprivation inactivates WDR24 by promoting interaction with 14-3-3 proteins, such as YWHAG, preventing assembly of the GATOR2 complex.</text>
</comment>
<comment type="PTM">
    <text evidence="13">Autoubiquitinated; MIOS is required to prevent autoubiquitination.</text>
</comment>
<comment type="similarity">
    <text evidence="16">Belongs to the WD repeat WDR24 family.</text>
</comment>
<comment type="caution">
    <text evidence="12 13 14">The E3 ubiquitin-protein ligase activity of the GATOR2 complex is subject to discussion (PubMed:35831510, PubMed:36528027). According to a report, the GATOR2 complex does not catalyze ubiquitination of the GATOR1 complex (PubMed:35831510). In contrast, two studies from a same group show that the WDR24 component of the GATOR2 complex mediates ubiquitination of the NPRL2 core component of the GATOR1 complex, leading to GATOR1 inactivation (PubMed:36528027, PubMed:36732624).</text>
</comment>
<comment type="sequence caution" evidence="16">
    <conflict type="erroneous gene model prediction">
        <sequence resource="EMBL-CDS" id="AAK61244"/>
    </conflict>
</comment>
<name>WDR24_HUMAN</name>
<evidence type="ECO:0000250" key="1">
    <source>
        <dbReference type="UniProtKB" id="Q8CFJ9"/>
    </source>
</evidence>
<evidence type="ECO:0000255" key="2"/>
<evidence type="ECO:0000269" key="3">
    <source>
    </source>
</evidence>
<evidence type="ECO:0000269" key="4">
    <source>
    </source>
</evidence>
<evidence type="ECO:0000269" key="5">
    <source>
    </source>
</evidence>
<evidence type="ECO:0000269" key="6">
    <source>
    </source>
</evidence>
<evidence type="ECO:0000269" key="7">
    <source>
    </source>
</evidence>
<evidence type="ECO:0000269" key="8">
    <source>
    </source>
</evidence>
<evidence type="ECO:0000269" key="9">
    <source>
    </source>
</evidence>
<evidence type="ECO:0000269" key="10">
    <source>
    </source>
</evidence>
<evidence type="ECO:0000269" key="11">
    <source>
    </source>
</evidence>
<evidence type="ECO:0000269" key="12">
    <source>
    </source>
</evidence>
<evidence type="ECO:0000269" key="13">
    <source>
    </source>
</evidence>
<evidence type="ECO:0000269" key="14">
    <source>
    </source>
</evidence>
<evidence type="ECO:0000303" key="15">
    <source>
    </source>
</evidence>
<evidence type="ECO:0000305" key="16"/>
<evidence type="ECO:0000305" key="17">
    <source>
    </source>
</evidence>
<evidence type="ECO:0000312" key="18">
    <source>
        <dbReference type="EMBL" id="AAK61244.1"/>
    </source>
</evidence>
<evidence type="ECO:0000312" key="19">
    <source>
        <dbReference type="HGNC" id="HGNC:20852"/>
    </source>
</evidence>
<evidence type="ECO:0007744" key="20">
    <source>
        <dbReference type="PDB" id="7UHY"/>
    </source>
</evidence>
<evidence type="ECO:0007744" key="21">
    <source>
    </source>
</evidence>
<evidence type="ECO:0007744" key="22">
    <source>
    </source>
</evidence>
<evidence type="ECO:0007744" key="23">
    <source>
    </source>
</evidence>
<accession>Q96S15</accession>
<accession>A2IDB8</accession>
<accession>D3DU59</accession>
<accession>Q96GC7</accession>
<accession>Q9H0B7</accession>